<proteinExistence type="inferred from homology"/>
<feature type="chain" id="PRO_0000438253" description="Tail tube protein">
    <location>
        <begin position="1"/>
        <end position="301"/>
    </location>
</feature>
<evidence type="ECO:0000250" key="1">
    <source>
        <dbReference type="UniProtKB" id="Q9MCC1"/>
    </source>
</evidence>
<evidence type="ECO:0000305" key="2"/>
<reference key="1">
    <citation type="journal article" date="1997" name="Mol. Microbiol.">
        <title>Analysis of the DNA sequence, gene expression, origin of replication and modular structure of the Lactococcus lactis lytic bacteriophage sk1.</title>
        <authorList>
            <person name="Chandry P.S."/>
            <person name="Moore S.C."/>
            <person name="Boyce J.D."/>
            <person name="Davidson B.E."/>
            <person name="Hillier A.J."/>
        </authorList>
    </citation>
    <scope>NUCLEOTIDE SEQUENCE [LARGE SCALE GENOMIC DNA]</scope>
</reference>
<sequence>MKLDYNSREIFFGNEALIVADMTKGSNGKPEFTNHKIVTGLVSVGSMEDQAETNSYPADDVPDHGVKKGATLLQGEMVFIQTDQALKEDILGQQRTENGLGWSPTGNWKTKCVQYLIKGRKRDKVTGEFVDGYRVVVYPHLTPTAEATKESETDSVDGVDPIQWTLAVQATDSDIYSNGGKKVPAIEYEIWGEQAKDFAKKMESGLFIMQPDTVLAGAITLVAPVIPNVTTATKGNNDGTIVVPATLKDSKGGTIKVTSVIKDAHGKVATNGQLAPGVYIVTFSADGYEDVTAGVSVTDHS</sequence>
<name>TUBE_BPLSK</name>
<organism>
    <name type="scientific">Lactococcus phage SK1</name>
    <name type="common">Lactococcus lactis bacteriophage SK1</name>
    <dbReference type="NCBI Taxonomy" id="2905675"/>
    <lineage>
        <taxon>Viruses</taxon>
        <taxon>Duplodnaviria</taxon>
        <taxon>Heunggongvirae</taxon>
        <taxon>Uroviricota</taxon>
        <taxon>Caudoviricetes</taxon>
        <taxon>Skunavirus</taxon>
        <taxon>Skunavirus sk1</taxon>
    </lineage>
</organism>
<accession>O21879</accession>
<protein>
    <recommendedName>
        <fullName evidence="1">Tail tube protein</fullName>
        <shortName>TTP</shortName>
    </recommendedName>
    <alternativeName>
        <fullName evidence="2">Gene product 11</fullName>
        <shortName evidence="2">gp11</shortName>
    </alternativeName>
    <alternativeName>
        <fullName evidence="1">Major tail protein</fullName>
        <shortName evidence="1">MTP</shortName>
    </alternativeName>
</protein>
<comment type="function">
    <text evidence="1">Forms the cylindrical rigid tail tube with a 4 nm wide central channel for DNA ejection. The tube is composed of 31 hexameric rings.</text>
</comment>
<comment type="subunit">
    <text evidence="1">Homohexamer. Interacts with the tail terminator protein.</text>
</comment>
<comment type="subcellular location">
    <subcellularLocation>
        <location evidence="1">Virion</location>
    </subcellularLocation>
    <text evidence="1">Constitutes the tail tube.</text>
</comment>
<comment type="domain">
    <text evidence="1">The C-terminus probably makes protruding decorations on the whole length of the tail tube.</text>
</comment>
<comment type="similarity">
    <text evidence="2">Belongs to the skunalikevirus tail tube protein family.</text>
</comment>
<organismHost>
    <name type="scientific">Lactococcus lactis</name>
    <dbReference type="NCBI Taxonomy" id="1358"/>
</organismHost>
<dbReference type="EMBL" id="AF011378">
    <property type="protein sequence ID" value="AAB70050.1"/>
    <property type="molecule type" value="Genomic_DNA"/>
</dbReference>
<dbReference type="RefSeq" id="NP_044957.1">
    <property type="nucleotide sequence ID" value="NC_001835.1"/>
</dbReference>
<dbReference type="GeneID" id="1261264"/>
<dbReference type="KEGG" id="vg:1261264"/>
<dbReference type="Proteomes" id="UP000000839">
    <property type="component" value="Genome"/>
</dbReference>
<dbReference type="GO" id="GO:0098026">
    <property type="term" value="C:virus tail, tube"/>
    <property type="evidence" value="ECO:0007669"/>
    <property type="project" value="UniProtKB-KW"/>
</dbReference>
<dbReference type="GO" id="GO:0099001">
    <property type="term" value="P:symbiont genome ejection through host cell envelope, long flexible tail mechanism"/>
    <property type="evidence" value="ECO:0007669"/>
    <property type="project" value="UniProtKB-KW"/>
</dbReference>
<dbReference type="InterPro" id="IPR010517">
    <property type="entry name" value="L_lac_phage_MSP"/>
</dbReference>
<dbReference type="InterPro" id="IPR046764">
    <property type="entry name" value="L_lac_phage_MSP_N"/>
</dbReference>
<dbReference type="InterPro" id="IPR046763">
    <property type="entry name" value="Phage_tube_C"/>
</dbReference>
<dbReference type="Pfam" id="PF06488">
    <property type="entry name" value="L_lac_phage_MSP"/>
    <property type="match status" value="1"/>
</dbReference>
<dbReference type="Pfam" id="PF20608">
    <property type="entry name" value="Phage_tube_C"/>
    <property type="match status" value="1"/>
</dbReference>
<dbReference type="PIRSF" id="PIRSF004357">
    <property type="entry name" value="L_lac_phage_MSP"/>
    <property type="match status" value="1"/>
</dbReference>
<keyword id="KW-1185">Reference proteome</keyword>
<keyword id="KW-1171">Viral genome ejection through host cell envelope</keyword>
<keyword id="KW-1243">Viral long flexible tail ejection system</keyword>
<keyword id="KW-1162">Viral penetration into host cytoplasm</keyword>
<keyword id="KW-1227">Viral tail protein</keyword>
<keyword id="KW-1228">Viral tail tube protein</keyword>
<keyword id="KW-0946">Virion</keyword>
<keyword id="KW-1160">Virus entry into host cell</keyword>